<reference key="1">
    <citation type="submission" date="2007-06" db="EMBL/GenBank/DDBJ databases">
        <authorList>
            <person name="Dodson R.J."/>
            <person name="Harkins D."/>
            <person name="Paulsen I.T."/>
        </authorList>
    </citation>
    <scope>NUCLEOTIDE SEQUENCE [LARGE SCALE GENOMIC DNA]</scope>
    <source>
        <strain>DSM 24068 / PA7</strain>
    </source>
</reference>
<comment type="function">
    <text evidence="1">Catalyzes the dehydration of methylthioribulose-1-phosphate (MTRu-1-P) into 2,3-diketo-5-methylthiopentyl-1-phosphate (DK-MTP-1-P).</text>
</comment>
<comment type="catalytic activity">
    <reaction evidence="1">
        <text>5-(methylsulfanyl)-D-ribulose 1-phosphate = 5-methylsulfanyl-2,3-dioxopentyl phosphate + H2O</text>
        <dbReference type="Rhea" id="RHEA:15549"/>
        <dbReference type="ChEBI" id="CHEBI:15377"/>
        <dbReference type="ChEBI" id="CHEBI:58548"/>
        <dbReference type="ChEBI" id="CHEBI:58828"/>
        <dbReference type="EC" id="4.2.1.109"/>
    </reaction>
</comment>
<comment type="cofactor">
    <cofactor evidence="1">
        <name>Zn(2+)</name>
        <dbReference type="ChEBI" id="CHEBI:29105"/>
    </cofactor>
    <text evidence="1">Binds 1 zinc ion per subunit.</text>
</comment>
<comment type="pathway">
    <text evidence="1">Amino-acid biosynthesis; L-methionine biosynthesis via salvage pathway; L-methionine from S-methyl-5-thio-alpha-D-ribose 1-phosphate: step 2/6.</text>
</comment>
<comment type="similarity">
    <text evidence="1">Belongs to the aldolase class II family. MtnB subfamily.</text>
</comment>
<feature type="chain" id="PRO_0000357098" description="Methylthioribulose-1-phosphate dehydratase">
    <location>
        <begin position="1"/>
        <end position="205"/>
    </location>
</feature>
<feature type="binding site" evidence="1">
    <location>
        <position position="96"/>
    </location>
    <ligand>
        <name>Zn(2+)</name>
        <dbReference type="ChEBI" id="CHEBI:29105"/>
    </ligand>
</feature>
<feature type="binding site" evidence="1">
    <location>
        <position position="98"/>
    </location>
    <ligand>
        <name>Zn(2+)</name>
        <dbReference type="ChEBI" id="CHEBI:29105"/>
    </ligand>
</feature>
<dbReference type="EC" id="4.2.1.109" evidence="1"/>
<dbReference type="EMBL" id="CP000744">
    <property type="protein sequence ID" value="ABR81624.1"/>
    <property type="molecule type" value="Genomic_DNA"/>
</dbReference>
<dbReference type="RefSeq" id="WP_003151901.1">
    <property type="nucleotide sequence ID" value="NC_009656.1"/>
</dbReference>
<dbReference type="SMR" id="A6V7A8"/>
<dbReference type="GeneID" id="77221695"/>
<dbReference type="KEGG" id="pap:PSPA7_3589"/>
<dbReference type="HOGENOM" id="CLU_006033_4_1_6"/>
<dbReference type="UniPathway" id="UPA00904">
    <property type="reaction ID" value="UER00875"/>
</dbReference>
<dbReference type="Proteomes" id="UP000001582">
    <property type="component" value="Chromosome"/>
</dbReference>
<dbReference type="GO" id="GO:0005737">
    <property type="term" value="C:cytoplasm"/>
    <property type="evidence" value="ECO:0007669"/>
    <property type="project" value="InterPro"/>
</dbReference>
<dbReference type="GO" id="GO:0046570">
    <property type="term" value="F:methylthioribulose 1-phosphate dehydratase activity"/>
    <property type="evidence" value="ECO:0007669"/>
    <property type="project" value="UniProtKB-UniRule"/>
</dbReference>
<dbReference type="GO" id="GO:0008270">
    <property type="term" value="F:zinc ion binding"/>
    <property type="evidence" value="ECO:0007669"/>
    <property type="project" value="UniProtKB-UniRule"/>
</dbReference>
<dbReference type="GO" id="GO:0019509">
    <property type="term" value="P:L-methionine salvage from methylthioadenosine"/>
    <property type="evidence" value="ECO:0007669"/>
    <property type="project" value="UniProtKB-UniRule"/>
</dbReference>
<dbReference type="GO" id="GO:0005996">
    <property type="term" value="P:monosaccharide metabolic process"/>
    <property type="evidence" value="ECO:0007669"/>
    <property type="project" value="UniProtKB-ARBA"/>
</dbReference>
<dbReference type="FunFam" id="3.40.225.10:FF:000007">
    <property type="entry name" value="Methylthioribulose-1-phosphate dehydratase"/>
    <property type="match status" value="1"/>
</dbReference>
<dbReference type="Gene3D" id="3.40.225.10">
    <property type="entry name" value="Class II aldolase/adducin N-terminal domain"/>
    <property type="match status" value="1"/>
</dbReference>
<dbReference type="HAMAP" id="MF_01677">
    <property type="entry name" value="Salvage_MtnB"/>
    <property type="match status" value="1"/>
</dbReference>
<dbReference type="InterPro" id="IPR001303">
    <property type="entry name" value="Aldolase_II/adducin_N"/>
</dbReference>
<dbReference type="InterPro" id="IPR036409">
    <property type="entry name" value="Aldolase_II/adducin_N_sf"/>
</dbReference>
<dbReference type="InterPro" id="IPR017714">
    <property type="entry name" value="MethylthioRu-1-P_deHdtase_MtnB"/>
</dbReference>
<dbReference type="NCBIfam" id="NF006672">
    <property type="entry name" value="PRK09220.1"/>
    <property type="match status" value="1"/>
</dbReference>
<dbReference type="NCBIfam" id="TIGR03328">
    <property type="entry name" value="salvage_mtnB"/>
    <property type="match status" value="1"/>
</dbReference>
<dbReference type="PANTHER" id="PTHR10640">
    <property type="entry name" value="METHYLTHIORIBULOSE-1-PHOSPHATE DEHYDRATASE"/>
    <property type="match status" value="1"/>
</dbReference>
<dbReference type="PANTHER" id="PTHR10640:SF7">
    <property type="entry name" value="METHYLTHIORIBULOSE-1-PHOSPHATE DEHYDRATASE"/>
    <property type="match status" value="1"/>
</dbReference>
<dbReference type="Pfam" id="PF00596">
    <property type="entry name" value="Aldolase_II"/>
    <property type="match status" value="1"/>
</dbReference>
<dbReference type="SMART" id="SM01007">
    <property type="entry name" value="Aldolase_II"/>
    <property type="match status" value="1"/>
</dbReference>
<dbReference type="SUPFAM" id="SSF53639">
    <property type="entry name" value="AraD/HMP-PK domain-like"/>
    <property type="match status" value="1"/>
</dbReference>
<keyword id="KW-0028">Amino-acid biosynthesis</keyword>
<keyword id="KW-0456">Lyase</keyword>
<keyword id="KW-0479">Metal-binding</keyword>
<keyword id="KW-0486">Methionine biosynthesis</keyword>
<keyword id="KW-0862">Zinc</keyword>
<name>MTNB_PSEP7</name>
<evidence type="ECO:0000255" key="1">
    <source>
        <dbReference type="HAMAP-Rule" id="MF_01677"/>
    </source>
</evidence>
<sequence length="205" mass="22746">MNDNREQLTQQIIDAGRFLYGRGWSPATSSNYSARLDEGRALLTVSGRHKGQLGFDDVLATDLAGNSLEPGKKPSAETLLHTQLYAWSPAIGAVLHTHSVNATVLSRLVRGDRLVLQDYELQKAFAGVTTHEGQVEVPIFDNDQDIARLAGRVQPWLEAHPDCPGYLIRGHGLYTWGARMSDALRQVEAFEFLFECELKVLSLSR</sequence>
<proteinExistence type="inferred from homology"/>
<organism>
    <name type="scientific">Pseudomonas paraeruginosa (strain DSM 24068 / PA7)</name>
    <name type="common">Pseudomonas aeruginosa (strain PA7)</name>
    <dbReference type="NCBI Taxonomy" id="381754"/>
    <lineage>
        <taxon>Bacteria</taxon>
        <taxon>Pseudomonadati</taxon>
        <taxon>Pseudomonadota</taxon>
        <taxon>Gammaproteobacteria</taxon>
        <taxon>Pseudomonadales</taxon>
        <taxon>Pseudomonadaceae</taxon>
        <taxon>Pseudomonas</taxon>
        <taxon>Pseudomonas paraeruginosa</taxon>
    </lineage>
</organism>
<accession>A6V7A8</accession>
<gene>
    <name evidence="1" type="primary">mtnB</name>
    <name type="ordered locus">PSPA7_3589</name>
</gene>
<protein>
    <recommendedName>
        <fullName evidence="1">Methylthioribulose-1-phosphate dehydratase</fullName>
        <shortName evidence="1">MTRu-1-P dehydratase</shortName>
        <ecNumber evidence="1">4.2.1.109</ecNumber>
    </recommendedName>
</protein>